<organism>
    <name type="scientific">Acidovorax sp. (strain JS42)</name>
    <dbReference type="NCBI Taxonomy" id="232721"/>
    <lineage>
        <taxon>Bacteria</taxon>
        <taxon>Pseudomonadati</taxon>
        <taxon>Pseudomonadota</taxon>
        <taxon>Betaproteobacteria</taxon>
        <taxon>Burkholderiales</taxon>
        <taxon>Comamonadaceae</taxon>
        <taxon>Acidovorax</taxon>
    </lineage>
</organism>
<evidence type="ECO:0000255" key="1">
    <source>
        <dbReference type="HAMAP-Rule" id="MF_00086"/>
    </source>
</evidence>
<proteinExistence type="inferred from homology"/>
<accession>A1W3X4</accession>
<sequence>MANDFLFTSESVSEGHPDKVADQISDAILDAIFTQDPRSRVAAETLTNTGLVVLAGEITTNAHVDYIQVARDTIQRIGYDNTEYGIDYKGCAVLVAYDKQSNDIAQGVDHASDDHLNTGAGDQGLMFGYACDETPELMPAPIYYAHRLVERQAQLRKDGRLPFLRPDAKSQVTMRYVDGKPHSIDTVVLSTQHSPDQSETATKMKASFTEAIIEEIIKPVLPKEWLQDTKYLINPTGRFVIGGPQGDCGLTGRKIIVDTYGGACPHGGGAFSGKDPTKVDRSAAYAARYVAKNIVAAGLARQCQIQVAYAIGVARPMNITVYTEGTGVIPDDQIAQLVQEHFDLRPKGIIQMLDLLRPIYAKTAAYGHFGREEPEFTWERTDKAAALRAAAGL</sequence>
<feature type="chain" id="PRO_0000302889" description="S-adenosylmethionine synthase">
    <location>
        <begin position="1"/>
        <end position="393"/>
    </location>
</feature>
<feature type="region of interest" description="Flexible loop" evidence="1">
    <location>
        <begin position="100"/>
        <end position="110"/>
    </location>
</feature>
<feature type="binding site" description="in other chain" evidence="1">
    <location>
        <position position="16"/>
    </location>
    <ligand>
        <name>ATP</name>
        <dbReference type="ChEBI" id="CHEBI:30616"/>
        <note>ligand shared between two neighboring subunits</note>
    </ligand>
</feature>
<feature type="binding site" evidence="1">
    <location>
        <position position="18"/>
    </location>
    <ligand>
        <name>Mg(2+)</name>
        <dbReference type="ChEBI" id="CHEBI:18420"/>
    </ligand>
</feature>
<feature type="binding site" evidence="1">
    <location>
        <position position="44"/>
    </location>
    <ligand>
        <name>K(+)</name>
        <dbReference type="ChEBI" id="CHEBI:29103"/>
    </ligand>
</feature>
<feature type="binding site" description="in other chain" evidence="1">
    <location>
        <position position="57"/>
    </location>
    <ligand>
        <name>L-methionine</name>
        <dbReference type="ChEBI" id="CHEBI:57844"/>
        <note>ligand shared between two neighboring subunits</note>
    </ligand>
</feature>
<feature type="binding site" description="in other chain" evidence="1">
    <location>
        <position position="100"/>
    </location>
    <ligand>
        <name>L-methionine</name>
        <dbReference type="ChEBI" id="CHEBI:57844"/>
        <note>ligand shared between two neighboring subunits</note>
    </ligand>
</feature>
<feature type="binding site" description="in other chain" evidence="1">
    <location>
        <begin position="167"/>
        <end position="169"/>
    </location>
    <ligand>
        <name>ATP</name>
        <dbReference type="ChEBI" id="CHEBI:30616"/>
        <note>ligand shared between two neighboring subunits</note>
    </ligand>
</feature>
<feature type="binding site" description="in other chain" evidence="1">
    <location>
        <begin position="238"/>
        <end position="239"/>
    </location>
    <ligand>
        <name>ATP</name>
        <dbReference type="ChEBI" id="CHEBI:30616"/>
        <note>ligand shared between two neighboring subunits</note>
    </ligand>
</feature>
<feature type="binding site" evidence="1">
    <location>
        <position position="247"/>
    </location>
    <ligand>
        <name>ATP</name>
        <dbReference type="ChEBI" id="CHEBI:30616"/>
        <note>ligand shared between two neighboring subunits</note>
    </ligand>
</feature>
<feature type="binding site" evidence="1">
    <location>
        <position position="247"/>
    </location>
    <ligand>
        <name>L-methionine</name>
        <dbReference type="ChEBI" id="CHEBI:57844"/>
        <note>ligand shared between two neighboring subunits</note>
    </ligand>
</feature>
<feature type="binding site" description="in other chain" evidence="1">
    <location>
        <begin position="253"/>
        <end position="254"/>
    </location>
    <ligand>
        <name>ATP</name>
        <dbReference type="ChEBI" id="CHEBI:30616"/>
        <note>ligand shared between two neighboring subunits</note>
    </ligand>
</feature>
<feature type="binding site" evidence="1">
    <location>
        <position position="270"/>
    </location>
    <ligand>
        <name>ATP</name>
        <dbReference type="ChEBI" id="CHEBI:30616"/>
        <note>ligand shared between two neighboring subunits</note>
    </ligand>
</feature>
<feature type="binding site" evidence="1">
    <location>
        <position position="274"/>
    </location>
    <ligand>
        <name>ATP</name>
        <dbReference type="ChEBI" id="CHEBI:30616"/>
        <note>ligand shared between two neighboring subunits</note>
    </ligand>
</feature>
<feature type="binding site" description="in other chain" evidence="1">
    <location>
        <position position="278"/>
    </location>
    <ligand>
        <name>L-methionine</name>
        <dbReference type="ChEBI" id="CHEBI:57844"/>
        <note>ligand shared between two neighboring subunits</note>
    </ligand>
</feature>
<gene>
    <name evidence="1" type="primary">metK</name>
    <name type="ordered locus">Ajs_0705</name>
</gene>
<comment type="function">
    <text evidence="1">Catalyzes the formation of S-adenosylmethionine (AdoMet) from methionine and ATP. The overall synthetic reaction is composed of two sequential steps, AdoMet formation and the subsequent tripolyphosphate hydrolysis which occurs prior to release of AdoMet from the enzyme.</text>
</comment>
<comment type="catalytic activity">
    <reaction evidence="1">
        <text>L-methionine + ATP + H2O = S-adenosyl-L-methionine + phosphate + diphosphate</text>
        <dbReference type="Rhea" id="RHEA:21080"/>
        <dbReference type="ChEBI" id="CHEBI:15377"/>
        <dbReference type="ChEBI" id="CHEBI:30616"/>
        <dbReference type="ChEBI" id="CHEBI:33019"/>
        <dbReference type="ChEBI" id="CHEBI:43474"/>
        <dbReference type="ChEBI" id="CHEBI:57844"/>
        <dbReference type="ChEBI" id="CHEBI:59789"/>
        <dbReference type="EC" id="2.5.1.6"/>
    </reaction>
</comment>
<comment type="cofactor">
    <cofactor evidence="1">
        <name>Mg(2+)</name>
        <dbReference type="ChEBI" id="CHEBI:18420"/>
    </cofactor>
    <text evidence="1">Binds 2 divalent ions per subunit.</text>
</comment>
<comment type="cofactor">
    <cofactor evidence="1">
        <name>K(+)</name>
        <dbReference type="ChEBI" id="CHEBI:29103"/>
    </cofactor>
    <text evidence="1">Binds 1 potassium ion per subunit.</text>
</comment>
<comment type="pathway">
    <text evidence="1">Amino-acid biosynthesis; S-adenosyl-L-methionine biosynthesis; S-adenosyl-L-methionine from L-methionine: step 1/1.</text>
</comment>
<comment type="subunit">
    <text evidence="1">Homotetramer; dimer of dimers.</text>
</comment>
<comment type="subcellular location">
    <subcellularLocation>
        <location evidence="1">Cytoplasm</location>
    </subcellularLocation>
</comment>
<comment type="similarity">
    <text evidence="1">Belongs to the AdoMet synthase family.</text>
</comment>
<name>METK_ACISJ</name>
<dbReference type="EC" id="2.5.1.6" evidence="1"/>
<dbReference type="EMBL" id="CP000539">
    <property type="protein sequence ID" value="ABM40949.1"/>
    <property type="molecule type" value="Genomic_DNA"/>
</dbReference>
<dbReference type="SMR" id="A1W3X4"/>
<dbReference type="STRING" id="232721.Ajs_0705"/>
<dbReference type="KEGG" id="ajs:Ajs_0705"/>
<dbReference type="eggNOG" id="COG0192">
    <property type="taxonomic scope" value="Bacteria"/>
</dbReference>
<dbReference type="HOGENOM" id="CLU_041802_1_1_4"/>
<dbReference type="UniPathway" id="UPA00315">
    <property type="reaction ID" value="UER00080"/>
</dbReference>
<dbReference type="Proteomes" id="UP000000645">
    <property type="component" value="Chromosome"/>
</dbReference>
<dbReference type="GO" id="GO:0005737">
    <property type="term" value="C:cytoplasm"/>
    <property type="evidence" value="ECO:0007669"/>
    <property type="project" value="UniProtKB-SubCell"/>
</dbReference>
<dbReference type="GO" id="GO:0005524">
    <property type="term" value="F:ATP binding"/>
    <property type="evidence" value="ECO:0007669"/>
    <property type="project" value="UniProtKB-UniRule"/>
</dbReference>
<dbReference type="GO" id="GO:0000287">
    <property type="term" value="F:magnesium ion binding"/>
    <property type="evidence" value="ECO:0007669"/>
    <property type="project" value="UniProtKB-UniRule"/>
</dbReference>
<dbReference type="GO" id="GO:0004478">
    <property type="term" value="F:methionine adenosyltransferase activity"/>
    <property type="evidence" value="ECO:0007669"/>
    <property type="project" value="UniProtKB-UniRule"/>
</dbReference>
<dbReference type="GO" id="GO:0006730">
    <property type="term" value="P:one-carbon metabolic process"/>
    <property type="evidence" value="ECO:0007669"/>
    <property type="project" value="UniProtKB-KW"/>
</dbReference>
<dbReference type="GO" id="GO:0006556">
    <property type="term" value="P:S-adenosylmethionine biosynthetic process"/>
    <property type="evidence" value="ECO:0007669"/>
    <property type="project" value="UniProtKB-UniRule"/>
</dbReference>
<dbReference type="CDD" id="cd18079">
    <property type="entry name" value="S-AdoMet_synt"/>
    <property type="match status" value="1"/>
</dbReference>
<dbReference type="FunFam" id="3.30.300.10:FF:000003">
    <property type="entry name" value="S-adenosylmethionine synthase"/>
    <property type="match status" value="1"/>
</dbReference>
<dbReference type="FunFam" id="3.30.300.10:FF:000004">
    <property type="entry name" value="S-adenosylmethionine synthase"/>
    <property type="match status" value="1"/>
</dbReference>
<dbReference type="Gene3D" id="3.30.300.10">
    <property type="match status" value="3"/>
</dbReference>
<dbReference type="HAMAP" id="MF_00086">
    <property type="entry name" value="S_AdoMet_synth1"/>
    <property type="match status" value="1"/>
</dbReference>
<dbReference type="InterPro" id="IPR022631">
    <property type="entry name" value="ADOMET_SYNTHASE_CS"/>
</dbReference>
<dbReference type="InterPro" id="IPR022630">
    <property type="entry name" value="S-AdoMet_synt_C"/>
</dbReference>
<dbReference type="InterPro" id="IPR022629">
    <property type="entry name" value="S-AdoMet_synt_central"/>
</dbReference>
<dbReference type="InterPro" id="IPR022628">
    <property type="entry name" value="S-AdoMet_synt_N"/>
</dbReference>
<dbReference type="InterPro" id="IPR002133">
    <property type="entry name" value="S-AdoMet_synthetase"/>
</dbReference>
<dbReference type="InterPro" id="IPR022636">
    <property type="entry name" value="S-AdoMet_synthetase_sfam"/>
</dbReference>
<dbReference type="NCBIfam" id="TIGR01034">
    <property type="entry name" value="metK"/>
    <property type="match status" value="1"/>
</dbReference>
<dbReference type="PANTHER" id="PTHR11964">
    <property type="entry name" value="S-ADENOSYLMETHIONINE SYNTHETASE"/>
    <property type="match status" value="1"/>
</dbReference>
<dbReference type="Pfam" id="PF02773">
    <property type="entry name" value="S-AdoMet_synt_C"/>
    <property type="match status" value="1"/>
</dbReference>
<dbReference type="Pfam" id="PF02772">
    <property type="entry name" value="S-AdoMet_synt_M"/>
    <property type="match status" value="1"/>
</dbReference>
<dbReference type="Pfam" id="PF00438">
    <property type="entry name" value="S-AdoMet_synt_N"/>
    <property type="match status" value="1"/>
</dbReference>
<dbReference type="PIRSF" id="PIRSF000497">
    <property type="entry name" value="MAT"/>
    <property type="match status" value="1"/>
</dbReference>
<dbReference type="SUPFAM" id="SSF55973">
    <property type="entry name" value="S-adenosylmethionine synthetase"/>
    <property type="match status" value="3"/>
</dbReference>
<dbReference type="PROSITE" id="PS00376">
    <property type="entry name" value="ADOMET_SYNTHASE_1"/>
    <property type="match status" value="1"/>
</dbReference>
<dbReference type="PROSITE" id="PS00377">
    <property type="entry name" value="ADOMET_SYNTHASE_2"/>
    <property type="match status" value="1"/>
</dbReference>
<reference key="1">
    <citation type="submission" date="2006-12" db="EMBL/GenBank/DDBJ databases">
        <title>Complete sequence of chromosome 1 of Acidovorax sp. JS42.</title>
        <authorList>
            <person name="Copeland A."/>
            <person name="Lucas S."/>
            <person name="Lapidus A."/>
            <person name="Barry K."/>
            <person name="Detter J.C."/>
            <person name="Glavina del Rio T."/>
            <person name="Dalin E."/>
            <person name="Tice H."/>
            <person name="Pitluck S."/>
            <person name="Chertkov O."/>
            <person name="Brettin T."/>
            <person name="Bruce D."/>
            <person name="Han C."/>
            <person name="Tapia R."/>
            <person name="Gilna P."/>
            <person name="Schmutz J."/>
            <person name="Larimer F."/>
            <person name="Land M."/>
            <person name="Hauser L."/>
            <person name="Kyrpides N."/>
            <person name="Kim E."/>
            <person name="Stahl D."/>
            <person name="Richardson P."/>
        </authorList>
    </citation>
    <scope>NUCLEOTIDE SEQUENCE [LARGE SCALE GENOMIC DNA]</scope>
    <source>
        <strain>JS42</strain>
    </source>
</reference>
<protein>
    <recommendedName>
        <fullName evidence="1">S-adenosylmethionine synthase</fullName>
        <shortName evidence="1">AdoMet synthase</shortName>
        <ecNumber evidence="1">2.5.1.6</ecNumber>
    </recommendedName>
    <alternativeName>
        <fullName evidence="1">MAT</fullName>
    </alternativeName>
    <alternativeName>
        <fullName evidence="1">Methionine adenosyltransferase</fullName>
    </alternativeName>
</protein>
<keyword id="KW-0067">ATP-binding</keyword>
<keyword id="KW-0963">Cytoplasm</keyword>
<keyword id="KW-0460">Magnesium</keyword>
<keyword id="KW-0479">Metal-binding</keyword>
<keyword id="KW-0547">Nucleotide-binding</keyword>
<keyword id="KW-0554">One-carbon metabolism</keyword>
<keyword id="KW-0630">Potassium</keyword>
<keyword id="KW-0808">Transferase</keyword>